<dbReference type="EMBL" id="X77675">
    <property type="protein sequence ID" value="CAA54745.1"/>
    <property type="molecule type" value="Genomic_DNA"/>
</dbReference>
<dbReference type="EMBL" id="U16761">
    <property type="protein sequence ID" value="AAA53433.1"/>
    <property type="molecule type" value="Genomic_DNA"/>
</dbReference>
<dbReference type="EMBL" id="Z38059">
    <property type="protein sequence ID" value="CAA86136.1"/>
    <property type="molecule type" value="Genomic_DNA"/>
</dbReference>
<dbReference type="EMBL" id="AY723831">
    <property type="protein sequence ID" value="AAU09748.1"/>
    <property type="molecule type" value="Genomic_DNA"/>
</dbReference>
<dbReference type="EMBL" id="U49845">
    <property type="protein sequence ID" value="AAA98665.1"/>
    <property type="molecule type" value="Genomic_DNA"/>
</dbReference>
<dbReference type="EMBL" id="BK006942">
    <property type="protein sequence ID" value="DAA08411.1"/>
    <property type="molecule type" value="Genomic_DNA"/>
</dbReference>
<dbReference type="PIR" id="S48232">
    <property type="entry name" value="S48232"/>
</dbReference>
<dbReference type="RefSeq" id="NP_012124.1">
    <property type="nucleotide sequence ID" value="NM_001179490.1"/>
</dbReference>
<dbReference type="PDB" id="4V81">
    <property type="method" value="X-ray"/>
    <property type="resolution" value="3.80 A"/>
    <property type="chains" value="B/J/b/j=1-527"/>
</dbReference>
<dbReference type="PDB" id="4V8R">
    <property type="method" value="X-ray"/>
    <property type="resolution" value="3.80 A"/>
    <property type="chains" value="AB/Ab/BB/Bb=1-527"/>
</dbReference>
<dbReference type="PDB" id="4V94">
    <property type="method" value="X-ray"/>
    <property type="resolution" value="3.80 A"/>
    <property type="chains" value="B/J/b/j=1-527"/>
</dbReference>
<dbReference type="PDB" id="5GW4">
    <property type="method" value="EM"/>
    <property type="resolution" value="4.70 A"/>
    <property type="chains" value="B/b=1-527"/>
</dbReference>
<dbReference type="PDB" id="5GW5">
    <property type="method" value="EM"/>
    <property type="resolution" value="4.60 A"/>
    <property type="chains" value="B/b=1-527"/>
</dbReference>
<dbReference type="PDB" id="6KRD">
    <property type="method" value="EM"/>
    <property type="resolution" value="4.38 A"/>
    <property type="chains" value="B/b=1-527"/>
</dbReference>
<dbReference type="PDB" id="6KRE">
    <property type="method" value="EM"/>
    <property type="resolution" value="4.45 A"/>
    <property type="chains" value="B/b=1-527"/>
</dbReference>
<dbReference type="PDB" id="6KS6">
    <property type="method" value="EM"/>
    <property type="resolution" value="2.99 A"/>
    <property type="chains" value="B/b=1-527"/>
</dbReference>
<dbReference type="PDB" id="6KS7">
    <property type="method" value="EM"/>
    <property type="resolution" value="4.62 A"/>
    <property type="chains" value="B/b=1-527"/>
</dbReference>
<dbReference type="PDB" id="6KS8">
    <property type="method" value="EM"/>
    <property type="resolution" value="4.69 A"/>
    <property type="chains" value="B/b=1-527"/>
</dbReference>
<dbReference type="PDB" id="7YLU">
    <property type="method" value="EM"/>
    <property type="resolution" value="4.55 A"/>
    <property type="chains" value="B/b=1-527"/>
</dbReference>
<dbReference type="PDB" id="7YLV">
    <property type="method" value="EM"/>
    <property type="resolution" value="3.91 A"/>
    <property type="chains" value="B/b=1-527"/>
</dbReference>
<dbReference type="PDB" id="7YLW">
    <property type="method" value="EM"/>
    <property type="resolution" value="3.39 A"/>
    <property type="chains" value="B/b=1-527"/>
</dbReference>
<dbReference type="PDB" id="7YLX">
    <property type="method" value="EM"/>
    <property type="resolution" value="3.20 A"/>
    <property type="chains" value="B/b=1-527"/>
</dbReference>
<dbReference type="PDB" id="7YLY">
    <property type="method" value="EM"/>
    <property type="resolution" value="3.05 A"/>
    <property type="chains" value="B/b=1-527"/>
</dbReference>
<dbReference type="PDB" id="9CR2">
    <property type="method" value="EM"/>
    <property type="resolution" value="4.80 A"/>
    <property type="chains" value="B/b=1-527"/>
</dbReference>
<dbReference type="PDB" id="9CS3">
    <property type="method" value="EM"/>
    <property type="resolution" value="5.60 A"/>
    <property type="chains" value="B/b=1-527"/>
</dbReference>
<dbReference type="PDB" id="9CS4">
    <property type="method" value="EM"/>
    <property type="resolution" value="6.80 A"/>
    <property type="chains" value="B/b=1-527"/>
</dbReference>
<dbReference type="PDB" id="9CS6">
    <property type="method" value="EM"/>
    <property type="resolution" value="4.10 A"/>
    <property type="chains" value="B/b=1-527"/>
</dbReference>
<dbReference type="PDB" id="9CSA">
    <property type="method" value="EM"/>
    <property type="resolution" value="3.60 A"/>
    <property type="chains" value="B/b=1-527"/>
</dbReference>
<dbReference type="PDBsum" id="4V81"/>
<dbReference type="PDBsum" id="4V8R"/>
<dbReference type="PDBsum" id="4V94"/>
<dbReference type="PDBsum" id="5GW4"/>
<dbReference type="PDBsum" id="5GW5"/>
<dbReference type="PDBsum" id="6KRD"/>
<dbReference type="PDBsum" id="6KRE"/>
<dbReference type="PDBsum" id="6KS6"/>
<dbReference type="PDBsum" id="6KS7"/>
<dbReference type="PDBsum" id="6KS8"/>
<dbReference type="PDBsum" id="7YLU"/>
<dbReference type="PDBsum" id="7YLV"/>
<dbReference type="PDBsum" id="7YLW"/>
<dbReference type="PDBsum" id="7YLX"/>
<dbReference type="PDBsum" id="7YLY"/>
<dbReference type="PDBsum" id="9CR2"/>
<dbReference type="PDBsum" id="9CS3"/>
<dbReference type="PDBsum" id="9CS4"/>
<dbReference type="PDBsum" id="9CS6"/>
<dbReference type="PDBsum" id="9CSA"/>
<dbReference type="EMDB" id="EMD-0756"/>
<dbReference type="EMDB" id="EMD-0757"/>
<dbReference type="EMDB" id="EMD-0758"/>
<dbReference type="EMDB" id="EMD-0759"/>
<dbReference type="EMDB" id="EMD-0760"/>
<dbReference type="EMDB" id="EMD-33917"/>
<dbReference type="EMDB" id="EMD-33918"/>
<dbReference type="EMDB" id="EMD-33919"/>
<dbReference type="EMDB" id="EMD-33920"/>
<dbReference type="EMDB" id="EMD-33921"/>
<dbReference type="EMDB" id="EMD-45830"/>
<dbReference type="EMDB" id="EMD-45886"/>
<dbReference type="EMDB" id="EMD-45887"/>
<dbReference type="EMDB" id="EMD-45888"/>
<dbReference type="EMDB" id="EMD-45889"/>
<dbReference type="EMDB" id="EMD-6902"/>
<dbReference type="EMDB" id="EMD-9540"/>
<dbReference type="EMDB" id="EMD-9541"/>
<dbReference type="SMR" id="P39076"/>
<dbReference type="BioGRID" id="34850">
    <property type="interactions" value="302"/>
</dbReference>
<dbReference type="ComplexPortal" id="CPX-2156">
    <property type="entry name" value="Chaperonin-containing T-complex"/>
</dbReference>
<dbReference type="DIP" id="DIP-4451N"/>
<dbReference type="FunCoup" id="P39076">
    <property type="interactions" value="1776"/>
</dbReference>
<dbReference type="IntAct" id="P39076">
    <property type="interactions" value="69"/>
</dbReference>
<dbReference type="MINT" id="P39076"/>
<dbReference type="STRING" id="4932.YIL142W"/>
<dbReference type="iPTMnet" id="P39076"/>
<dbReference type="PaxDb" id="4932-YIL142W"/>
<dbReference type="PeptideAtlas" id="P39076"/>
<dbReference type="DNASU" id="854664"/>
<dbReference type="EnsemblFungi" id="YIL142W_mRNA">
    <property type="protein sequence ID" value="YIL142W"/>
    <property type="gene ID" value="YIL142W"/>
</dbReference>
<dbReference type="GeneID" id="854664"/>
<dbReference type="KEGG" id="sce:YIL142W"/>
<dbReference type="AGR" id="SGD:S000001404"/>
<dbReference type="SGD" id="S000001404">
    <property type="gene designation" value="CCT2"/>
</dbReference>
<dbReference type="VEuPathDB" id="FungiDB:YIL142W"/>
<dbReference type="eggNOG" id="KOG0363">
    <property type="taxonomic scope" value="Eukaryota"/>
</dbReference>
<dbReference type="GeneTree" id="ENSGT00550000074930"/>
<dbReference type="HOGENOM" id="CLU_008891_6_2_1"/>
<dbReference type="InParanoid" id="P39076"/>
<dbReference type="OMA" id="CAEMVMS"/>
<dbReference type="OrthoDB" id="10248520at2759"/>
<dbReference type="BioCyc" id="YEAST:G3O-31392-MONOMER"/>
<dbReference type="BRENDA" id="3.6.4.B10">
    <property type="organism ID" value="984"/>
</dbReference>
<dbReference type="Reactome" id="R-SCE-390471">
    <property type="pathway name" value="Association of TriC/CCT with target proteins during biosynthesis"/>
</dbReference>
<dbReference type="Reactome" id="R-SCE-6798695">
    <property type="pathway name" value="Neutrophil degranulation"/>
</dbReference>
<dbReference type="Reactome" id="R-SCE-6814122">
    <property type="pathway name" value="Cooperation of PDCL (PhLP1) and TRiC/CCT in G-protein beta folding"/>
</dbReference>
<dbReference type="BioGRID-ORCS" id="854664">
    <property type="hits" value="9 hits in 10 CRISPR screens"/>
</dbReference>
<dbReference type="CD-CODE" id="E03F929F">
    <property type="entry name" value="Stress granule"/>
</dbReference>
<dbReference type="PRO" id="PR:P39076"/>
<dbReference type="Proteomes" id="UP000002311">
    <property type="component" value="Chromosome IX"/>
</dbReference>
<dbReference type="RNAct" id="P39076">
    <property type="molecule type" value="protein"/>
</dbReference>
<dbReference type="GO" id="GO:0005832">
    <property type="term" value="C:chaperonin-containing T-complex"/>
    <property type="evidence" value="ECO:0000314"/>
    <property type="project" value="SGD"/>
</dbReference>
<dbReference type="GO" id="GO:0005737">
    <property type="term" value="C:cytoplasm"/>
    <property type="evidence" value="ECO:0007005"/>
    <property type="project" value="SGD"/>
</dbReference>
<dbReference type="GO" id="GO:0005524">
    <property type="term" value="F:ATP binding"/>
    <property type="evidence" value="ECO:0007669"/>
    <property type="project" value="UniProtKB-KW"/>
</dbReference>
<dbReference type="GO" id="GO:0016887">
    <property type="term" value="F:ATP hydrolysis activity"/>
    <property type="evidence" value="ECO:0007669"/>
    <property type="project" value="InterPro"/>
</dbReference>
<dbReference type="GO" id="GO:0140662">
    <property type="term" value="F:ATP-dependent protein folding chaperone"/>
    <property type="evidence" value="ECO:0007669"/>
    <property type="project" value="InterPro"/>
</dbReference>
<dbReference type="GO" id="GO:0051082">
    <property type="term" value="F:unfolded protein binding"/>
    <property type="evidence" value="ECO:0000314"/>
    <property type="project" value="SGD"/>
</dbReference>
<dbReference type="GO" id="GO:0051086">
    <property type="term" value="P:chaperone mediated protein folding independent of cofactor"/>
    <property type="evidence" value="ECO:0000314"/>
    <property type="project" value="ComplexPortal"/>
</dbReference>
<dbReference type="GO" id="GO:0006457">
    <property type="term" value="P:protein folding"/>
    <property type="evidence" value="ECO:0000314"/>
    <property type="project" value="SGD"/>
</dbReference>
<dbReference type="CDD" id="cd03336">
    <property type="entry name" value="TCP1_beta"/>
    <property type="match status" value="1"/>
</dbReference>
<dbReference type="FunFam" id="3.30.260.10:FF:000025">
    <property type="entry name" value="Chaperonin containing TCP1 subunit 2"/>
    <property type="match status" value="1"/>
</dbReference>
<dbReference type="FunFam" id="3.50.7.10:FF:000002">
    <property type="entry name" value="T-complex protein 1 subunit beta"/>
    <property type="match status" value="1"/>
</dbReference>
<dbReference type="FunFam" id="1.10.560.10:FF:000017">
    <property type="entry name" value="T-complex protein 1 subunit eta"/>
    <property type="match status" value="1"/>
</dbReference>
<dbReference type="Gene3D" id="3.50.7.10">
    <property type="entry name" value="GroEL"/>
    <property type="match status" value="1"/>
</dbReference>
<dbReference type="Gene3D" id="1.10.560.10">
    <property type="entry name" value="GroEL-like equatorial domain"/>
    <property type="match status" value="1"/>
</dbReference>
<dbReference type="Gene3D" id="3.30.260.10">
    <property type="entry name" value="TCP-1-like chaperonin intermediate domain"/>
    <property type="match status" value="1"/>
</dbReference>
<dbReference type="InterPro" id="IPR012716">
    <property type="entry name" value="Chap_CCT_beta"/>
</dbReference>
<dbReference type="InterPro" id="IPR017998">
    <property type="entry name" value="Chaperone_TCP-1"/>
</dbReference>
<dbReference type="InterPro" id="IPR002194">
    <property type="entry name" value="Chaperonin_TCP-1_CS"/>
</dbReference>
<dbReference type="InterPro" id="IPR002423">
    <property type="entry name" value="Cpn60/GroEL/TCP-1"/>
</dbReference>
<dbReference type="InterPro" id="IPR027409">
    <property type="entry name" value="GroEL-like_apical_dom_sf"/>
</dbReference>
<dbReference type="InterPro" id="IPR027413">
    <property type="entry name" value="GROEL-like_equatorial_sf"/>
</dbReference>
<dbReference type="InterPro" id="IPR027410">
    <property type="entry name" value="TCP-1-like_intermed_sf"/>
</dbReference>
<dbReference type="NCBIfam" id="TIGR02341">
    <property type="entry name" value="chap_CCT_beta"/>
    <property type="match status" value="1"/>
</dbReference>
<dbReference type="PANTHER" id="PTHR11353">
    <property type="entry name" value="CHAPERONIN"/>
    <property type="match status" value="1"/>
</dbReference>
<dbReference type="Pfam" id="PF00118">
    <property type="entry name" value="Cpn60_TCP1"/>
    <property type="match status" value="1"/>
</dbReference>
<dbReference type="PRINTS" id="PR00304">
    <property type="entry name" value="TCOMPLEXTCP1"/>
</dbReference>
<dbReference type="SUPFAM" id="SSF52029">
    <property type="entry name" value="GroEL apical domain-like"/>
    <property type="match status" value="1"/>
</dbReference>
<dbReference type="SUPFAM" id="SSF48592">
    <property type="entry name" value="GroEL equatorial domain-like"/>
    <property type="match status" value="1"/>
</dbReference>
<dbReference type="SUPFAM" id="SSF54849">
    <property type="entry name" value="GroEL-intermediate domain like"/>
    <property type="match status" value="1"/>
</dbReference>
<dbReference type="PROSITE" id="PS00750">
    <property type="entry name" value="TCP1_1"/>
    <property type="match status" value="1"/>
</dbReference>
<dbReference type="PROSITE" id="PS00751">
    <property type="entry name" value="TCP1_2"/>
    <property type="match status" value="1"/>
</dbReference>
<dbReference type="PROSITE" id="PS00995">
    <property type="entry name" value="TCP1_3"/>
    <property type="match status" value="1"/>
</dbReference>
<sequence>MSVQIFGDQVTEERAENARLSAFVGAIAVGDLVKSTLGPKGMDKLLQSASSNTCMVTNDGATILKSIPLDNPAAKVLVNISKVQDDEVGDGTTSVTVLSAELLREAEKLIDQSKIHPQTIIEGYRLASAAALDALTKAAVDNSHDKTMFREDLIHIAKTTLSSKILSQDKDHFAELATNAILRLKGSTNLEHIQIIKILGGKLSDSFLDEGFILAKKFGNNQPKRIENAKILIANTTLDTDKVKIFGTKFKVDSTAKLAQLEKAEREKMKNKIAKISKFGINTFINRQLIYDYPEQLFTDLGINSIEHADFEGVERLALVTGGEVVSTFDEPSKCKLGECDVIEEIMLGEQPFLKFSGCKAGEACTIVLRGATDQTLDEAERSLHDALSVLSQTTKETRTVLGGGCAEMVMSKAVDTEAQNIDGKKSLAVEAFARALRQLPTILADNAGFDSSELVSKLRSSIYNGISTSGLDLNNGTIADMRQLGIVESYKLKRAVVSSASEAAEVLLRVDNIIRARPRTANRQHM</sequence>
<accession>P39076</accession>
<accession>D6VVE5</accession>
<organism>
    <name type="scientific">Saccharomyces cerevisiae (strain ATCC 204508 / S288c)</name>
    <name type="common">Baker's yeast</name>
    <dbReference type="NCBI Taxonomy" id="559292"/>
    <lineage>
        <taxon>Eukaryota</taxon>
        <taxon>Fungi</taxon>
        <taxon>Dikarya</taxon>
        <taxon>Ascomycota</taxon>
        <taxon>Saccharomycotina</taxon>
        <taxon>Saccharomycetes</taxon>
        <taxon>Saccharomycetales</taxon>
        <taxon>Saccharomycetaceae</taxon>
        <taxon>Saccharomyces</taxon>
    </lineage>
</organism>
<keyword id="KW-0002">3D-structure</keyword>
<keyword id="KW-0007">Acetylation</keyword>
<keyword id="KW-0067">ATP-binding</keyword>
<keyword id="KW-0143">Chaperone</keyword>
<keyword id="KW-0963">Cytoplasm</keyword>
<keyword id="KW-0547">Nucleotide-binding</keyword>
<keyword id="KW-1185">Reference proteome</keyword>
<protein>
    <recommendedName>
        <fullName>T-complex protein 1 subunit beta</fullName>
        <shortName>TCP-1-beta</shortName>
    </recommendedName>
    <alternativeName>
        <fullName>CCT-beta</fullName>
    </alternativeName>
</protein>
<evidence type="ECO:0000250" key="1">
    <source>
        <dbReference type="UniProtKB" id="P78371"/>
    </source>
</evidence>
<evidence type="ECO:0000269" key="2">
    <source>
    </source>
</evidence>
<evidence type="ECO:0000305" key="3"/>
<evidence type="ECO:0007744" key="4">
    <source>
    </source>
</evidence>
<evidence type="ECO:0007829" key="5">
    <source>
        <dbReference type="PDB" id="6KS6"/>
    </source>
</evidence>
<evidence type="ECO:0007829" key="6">
    <source>
        <dbReference type="PDB" id="7YLY"/>
    </source>
</evidence>
<reference key="1">
    <citation type="journal article" date="1994" name="Proc. Natl. Acad. Sci. U.S.A.">
        <title>Primary structure and function of a second essential member of the heterooligomeric TCP1 chaperonin complex of yeast, TCP1 beta.</title>
        <authorList>
            <person name="Miklos D."/>
            <person name="Caplan S."/>
            <person name="Mertens D."/>
            <person name="Hynes G."/>
            <person name="Pitluk Z."/>
            <person name="Kashi Y."/>
            <person name="Harrison-Lavoie K."/>
            <person name="Stevenson S."/>
            <person name="Brown C."/>
            <person name="Barrell B.G."/>
            <person name="Horwich A.L."/>
            <person name="Willison K."/>
        </authorList>
    </citation>
    <scope>NUCLEOTIDE SEQUENCE [GENOMIC DNA]</scope>
    <source>
        <strain>ATCC 204511 / S288c / AB972</strain>
    </source>
</reference>
<reference key="2">
    <citation type="journal article" date="1994" name="Proc. Natl. Acad. Sci. U.S.A.">
        <title>Two yeast genes with similarity to TCP-1 are required for microtubule and actin function in vivo.</title>
        <authorList>
            <person name="Chen X."/>
            <person name="Sullivan D.S."/>
            <person name="Huffaker T.C."/>
        </authorList>
    </citation>
    <scope>NUCLEOTIDE SEQUENCE [GENOMIC DNA]</scope>
    <source>
        <strain>ATCC 204508 / S288c</strain>
    </source>
</reference>
<reference key="3">
    <citation type="journal article" date="1997" name="Nature">
        <title>The nucleotide sequence of Saccharomyces cerevisiae chromosome IX.</title>
        <authorList>
            <person name="Churcher C.M."/>
            <person name="Bowman S."/>
            <person name="Badcock K."/>
            <person name="Bankier A.T."/>
            <person name="Brown D."/>
            <person name="Chillingworth T."/>
            <person name="Connor R."/>
            <person name="Devlin K."/>
            <person name="Gentles S."/>
            <person name="Hamlin N."/>
            <person name="Harris D.E."/>
            <person name="Horsnell T."/>
            <person name="Hunt S."/>
            <person name="Jagels K."/>
            <person name="Jones M."/>
            <person name="Lye G."/>
            <person name="Moule S."/>
            <person name="Odell C."/>
            <person name="Pearson D."/>
            <person name="Rajandream M.A."/>
            <person name="Rice P."/>
            <person name="Rowley N."/>
            <person name="Skelton J."/>
            <person name="Smith V."/>
            <person name="Walsh S.V."/>
            <person name="Whitehead S."/>
            <person name="Barrell B.G."/>
        </authorList>
    </citation>
    <scope>NUCLEOTIDE SEQUENCE [LARGE SCALE GENOMIC DNA]</scope>
    <source>
        <strain>ATCC 204508 / S288c</strain>
    </source>
</reference>
<reference key="4">
    <citation type="journal article" date="2014" name="G3 (Bethesda)">
        <title>The reference genome sequence of Saccharomyces cerevisiae: Then and now.</title>
        <authorList>
            <person name="Engel S.R."/>
            <person name="Dietrich F.S."/>
            <person name="Fisk D.G."/>
            <person name="Binkley G."/>
            <person name="Balakrishnan R."/>
            <person name="Costanzo M.C."/>
            <person name="Dwight S.S."/>
            <person name="Hitz B.C."/>
            <person name="Karra K."/>
            <person name="Nash R.S."/>
            <person name="Weng S."/>
            <person name="Wong E.D."/>
            <person name="Lloyd P."/>
            <person name="Skrzypek M.S."/>
            <person name="Miyasato S.R."/>
            <person name="Simison M."/>
            <person name="Cherry J.M."/>
        </authorList>
    </citation>
    <scope>GENOME REANNOTATION</scope>
    <source>
        <strain>ATCC 204508 / S288c</strain>
    </source>
</reference>
<reference key="5">
    <citation type="journal article" date="2007" name="Genome Res.">
        <title>Approaching a complete repository of sequence-verified protein-encoding clones for Saccharomyces cerevisiae.</title>
        <authorList>
            <person name="Hu Y."/>
            <person name="Rolfs A."/>
            <person name="Bhullar B."/>
            <person name="Murthy T.V.S."/>
            <person name="Zhu C."/>
            <person name="Berger M.F."/>
            <person name="Camargo A.A."/>
            <person name="Kelley F."/>
            <person name="McCarron S."/>
            <person name="Jepson D."/>
            <person name="Richardson A."/>
            <person name="Raphael J."/>
            <person name="Moreira D."/>
            <person name="Taycher E."/>
            <person name="Zuo D."/>
            <person name="Mohr S."/>
            <person name="Kane M.F."/>
            <person name="Williamson J."/>
            <person name="Simpson A.J.G."/>
            <person name="Bulyk M.L."/>
            <person name="Harlow E."/>
            <person name="Marsischky G."/>
            <person name="Kolodner R.D."/>
            <person name="LaBaer J."/>
        </authorList>
    </citation>
    <scope>NUCLEOTIDE SEQUENCE [GENOMIC DNA]</scope>
    <source>
        <strain>ATCC 204508 / S288c</strain>
    </source>
</reference>
<reference key="6">
    <citation type="submission" date="1996-05" db="EMBL/GenBank/DDBJ databases">
        <authorList>
            <person name="Roemer T."/>
            <person name="Madden K."/>
            <person name="Chang J."/>
            <person name="Snyder M."/>
        </authorList>
    </citation>
    <scope>NUCLEOTIDE SEQUENCE [GENOMIC DNA] OF 461-527</scope>
</reference>
<reference key="7">
    <citation type="journal article" date="2007" name="Mol. Biol. Cell">
        <title>Functional interaction between phosducin-like protein 2 and cytosolic chaperonin is essential for cytoskeletal protein function and cell cycle progression.</title>
        <authorList>
            <person name="Stirling P.C."/>
            <person name="Srayko M."/>
            <person name="Takhar K.S."/>
            <person name="Pozniakovsky A."/>
            <person name="Hyman A.A."/>
            <person name="Leroux M.R."/>
        </authorList>
    </citation>
    <scope>INTERACTION WITH PLP2</scope>
</reference>
<reference key="8">
    <citation type="journal article" date="2008" name="Mol. Cell. Proteomics">
        <title>A multidimensional chromatography technology for in-depth phosphoproteome analysis.</title>
        <authorList>
            <person name="Albuquerque C.P."/>
            <person name="Smolka M.B."/>
            <person name="Payne S.H."/>
            <person name="Bafna V."/>
            <person name="Eng J."/>
            <person name="Zhou H."/>
        </authorList>
    </citation>
    <scope>IDENTIFICATION BY MASS SPECTROMETRY [LARGE SCALE ANALYSIS]</scope>
</reference>
<reference key="9">
    <citation type="journal article" date="2012" name="Proc. Natl. Acad. Sci. U.S.A.">
        <title>N-terminal acetylome analyses and functional insights of the N-terminal acetyltransferase NatB.</title>
        <authorList>
            <person name="Van Damme P."/>
            <person name="Lasa M."/>
            <person name="Polevoda B."/>
            <person name="Gazquez C."/>
            <person name="Elosegui-Artola A."/>
            <person name="Kim D.S."/>
            <person name="De Juan-Pardo E."/>
            <person name="Demeyer K."/>
            <person name="Hole K."/>
            <person name="Larrea E."/>
            <person name="Timmerman E."/>
            <person name="Prieto J."/>
            <person name="Arnesen T."/>
            <person name="Sherman F."/>
            <person name="Gevaert K."/>
            <person name="Aldabe R."/>
        </authorList>
    </citation>
    <scope>ACETYLATION [LARGE SCALE ANALYSIS] AT SER-2</scope>
    <scope>CLEAVAGE OF INITIATOR METHIONINE [LARGE SCALE ANALYSIS]</scope>
    <scope>IDENTIFICATION BY MASS SPECTROMETRY [LARGE SCALE ANALYSIS]</scope>
</reference>
<comment type="function">
    <text>Molecular chaperone; assists the folding of proteins upon ATP hydrolysis. Known to play a role, in vitro, in the folding of actin and tubulin. In yeast may play a role in mitotic spindle formation.</text>
</comment>
<comment type="subunit">
    <text evidence="1 2">Heterooligomeric complex of about 850 to 900 kDa that forms two stacked rings, 12 to 16 nm in diameter (By similarity). Interacts with PLP2; this interaction leads to inhibition of CCT complex mediated actin folding (PubMed:17429077).</text>
</comment>
<comment type="subcellular location">
    <subcellularLocation>
        <location>Cytoplasm</location>
    </subcellularLocation>
</comment>
<comment type="similarity">
    <text evidence="3">Belongs to the TCP-1 chaperonin family.</text>
</comment>
<name>TCPB_YEAST</name>
<proteinExistence type="evidence at protein level"/>
<gene>
    <name type="primary">CCT2</name>
    <name type="synonym">BIN3</name>
    <name type="synonym">TCP2</name>
    <name type="ordered locus">YIL142W</name>
</gene>
<feature type="initiator methionine" description="Removed" evidence="4">
    <location>
        <position position="1"/>
    </location>
</feature>
<feature type="chain" id="PRO_0000128320" description="T-complex protein 1 subunit beta">
    <location>
        <begin position="2"/>
        <end position="527"/>
    </location>
</feature>
<feature type="modified residue" description="N-acetylserine" evidence="4">
    <location>
        <position position="2"/>
    </location>
</feature>
<feature type="strand" evidence="5">
    <location>
        <begin position="11"/>
        <end position="14"/>
    </location>
</feature>
<feature type="turn" evidence="5">
    <location>
        <begin position="15"/>
        <end position="20"/>
    </location>
</feature>
<feature type="helix" evidence="5">
    <location>
        <begin position="21"/>
        <end position="34"/>
    </location>
</feature>
<feature type="strand" evidence="5">
    <location>
        <begin position="43"/>
        <end position="50"/>
    </location>
</feature>
<feature type="strand" evidence="5">
    <location>
        <begin position="54"/>
        <end position="57"/>
    </location>
</feature>
<feature type="helix" evidence="5">
    <location>
        <begin position="60"/>
        <end position="66"/>
    </location>
</feature>
<feature type="helix" evidence="5">
    <location>
        <begin position="74"/>
        <end position="87"/>
    </location>
</feature>
<feature type="helix" evidence="5">
    <location>
        <begin position="92"/>
        <end position="111"/>
    </location>
</feature>
<feature type="helix" evidence="5">
    <location>
        <begin position="117"/>
        <end position="137"/>
    </location>
</feature>
<feature type="strand" evidence="5">
    <location>
        <begin position="143"/>
        <end position="145"/>
    </location>
</feature>
<feature type="helix" evidence="5">
    <location>
        <begin position="146"/>
        <end position="163"/>
    </location>
</feature>
<feature type="helix" evidence="5">
    <location>
        <begin position="165"/>
        <end position="167"/>
    </location>
</feature>
<feature type="helix" evidence="5">
    <location>
        <begin position="170"/>
        <end position="182"/>
    </location>
</feature>
<feature type="turn" evidence="5">
    <location>
        <begin position="183"/>
        <end position="186"/>
    </location>
</feature>
<feature type="helix" evidence="6">
    <location>
        <begin position="190"/>
        <end position="192"/>
    </location>
</feature>
<feature type="strand" evidence="5">
    <location>
        <begin position="193"/>
        <end position="201"/>
    </location>
</feature>
<feature type="helix" evidence="5">
    <location>
        <begin position="203"/>
        <end position="205"/>
    </location>
</feature>
<feature type="strand" evidence="6">
    <location>
        <begin position="214"/>
        <end position="216"/>
    </location>
</feature>
<feature type="strand" evidence="5">
    <location>
        <begin position="220"/>
        <end position="222"/>
    </location>
</feature>
<feature type="strand" evidence="5">
    <location>
        <begin position="227"/>
        <end position="229"/>
    </location>
</feature>
<feature type="strand" evidence="5">
    <location>
        <begin position="233"/>
        <end position="236"/>
    </location>
</feature>
<feature type="strand" evidence="5">
    <location>
        <begin position="243"/>
        <end position="248"/>
    </location>
</feature>
<feature type="strand" evidence="5">
    <location>
        <begin position="250"/>
        <end position="254"/>
    </location>
</feature>
<feature type="helix" evidence="5">
    <location>
        <begin position="256"/>
        <end position="277"/>
    </location>
</feature>
<feature type="strand" evidence="5">
    <location>
        <begin position="282"/>
        <end position="288"/>
    </location>
</feature>
<feature type="helix" evidence="5">
    <location>
        <begin position="292"/>
        <end position="300"/>
    </location>
</feature>
<feature type="strand" evidence="5">
    <location>
        <begin position="304"/>
        <end position="306"/>
    </location>
</feature>
<feature type="helix" evidence="5">
    <location>
        <begin position="311"/>
        <end position="321"/>
    </location>
</feature>
<feature type="strand" evidence="5">
    <location>
        <begin position="326"/>
        <end position="328"/>
    </location>
</feature>
<feature type="strand" evidence="5">
    <location>
        <begin position="332"/>
        <end position="335"/>
    </location>
</feature>
<feature type="strand" evidence="5">
    <location>
        <begin position="340"/>
        <end position="342"/>
    </location>
</feature>
<feature type="strand" evidence="5">
    <location>
        <begin position="345"/>
        <end position="348"/>
    </location>
</feature>
<feature type="strand" evidence="5">
    <location>
        <begin position="351"/>
        <end position="355"/>
    </location>
</feature>
<feature type="strand" evidence="5">
    <location>
        <begin position="363"/>
        <end position="373"/>
    </location>
</feature>
<feature type="helix" evidence="5">
    <location>
        <begin position="374"/>
        <end position="396"/>
    </location>
</feature>
<feature type="strand" evidence="5">
    <location>
        <begin position="400"/>
        <end position="402"/>
    </location>
</feature>
<feature type="helix" evidence="5">
    <location>
        <begin position="406"/>
        <end position="419"/>
    </location>
</feature>
<feature type="helix" evidence="6">
    <location>
        <begin position="420"/>
        <end position="422"/>
    </location>
</feature>
<feature type="helix" evidence="5">
    <location>
        <begin position="426"/>
        <end position="437"/>
    </location>
</feature>
<feature type="helix" evidence="5">
    <location>
        <begin position="439"/>
        <end position="447"/>
    </location>
</feature>
<feature type="helix" evidence="5">
    <location>
        <begin position="452"/>
        <end position="464"/>
    </location>
</feature>
<feature type="strand" evidence="5">
    <location>
        <begin position="470"/>
        <end position="473"/>
    </location>
</feature>
<feature type="turn" evidence="5">
    <location>
        <begin position="474"/>
        <end position="477"/>
    </location>
</feature>
<feature type="strand" evidence="5">
    <location>
        <begin position="478"/>
        <end position="481"/>
    </location>
</feature>
<feature type="helix" evidence="5">
    <location>
        <begin position="482"/>
        <end position="485"/>
    </location>
</feature>
<feature type="strand" evidence="5">
    <location>
        <begin position="488"/>
        <end position="490"/>
    </location>
</feature>
<feature type="helix" evidence="5">
    <location>
        <begin position="491"/>
        <end position="508"/>
    </location>
</feature>
<feature type="strand" evidence="5">
    <location>
        <begin position="511"/>
        <end position="516"/>
    </location>
</feature>